<protein>
    <recommendedName>
        <fullName evidence="1">Probable nicotinate-nucleotide adenylyltransferase</fullName>
        <ecNumber evidence="1">2.7.7.18</ecNumber>
    </recommendedName>
    <alternativeName>
        <fullName evidence="1">Deamido-NAD(+) diphosphorylase</fullName>
    </alternativeName>
    <alternativeName>
        <fullName evidence="1">Deamido-NAD(+) pyrophosphorylase</fullName>
    </alternativeName>
    <alternativeName>
        <fullName evidence="1">Nicotinate mononucleotide adenylyltransferase</fullName>
        <shortName evidence="1">NaMN adenylyltransferase</shortName>
    </alternativeName>
</protein>
<reference key="1">
    <citation type="journal article" date="2002" name="Nucleic Acids Res.">
        <title>Genome sequence of Oceanobacillus iheyensis isolated from the Iheya Ridge and its unexpected adaptive capabilities to extreme environments.</title>
        <authorList>
            <person name="Takami H."/>
            <person name="Takaki Y."/>
            <person name="Uchiyama I."/>
        </authorList>
    </citation>
    <scope>NUCLEOTIDE SEQUENCE [LARGE SCALE GENOMIC DNA]</scope>
    <source>
        <strain>DSM 14371 / CIP 107618 / JCM 11309 / KCTC 3954 / HTE831</strain>
    </source>
</reference>
<comment type="function">
    <text evidence="1">Catalyzes the reversible adenylation of nicotinate mononucleotide (NaMN) to nicotinic acid adenine dinucleotide (NaAD).</text>
</comment>
<comment type="catalytic activity">
    <reaction evidence="1">
        <text>nicotinate beta-D-ribonucleotide + ATP + H(+) = deamido-NAD(+) + diphosphate</text>
        <dbReference type="Rhea" id="RHEA:22860"/>
        <dbReference type="ChEBI" id="CHEBI:15378"/>
        <dbReference type="ChEBI" id="CHEBI:30616"/>
        <dbReference type="ChEBI" id="CHEBI:33019"/>
        <dbReference type="ChEBI" id="CHEBI:57502"/>
        <dbReference type="ChEBI" id="CHEBI:58437"/>
        <dbReference type="EC" id="2.7.7.18"/>
    </reaction>
</comment>
<comment type="pathway">
    <text evidence="1">Cofactor biosynthesis; NAD(+) biosynthesis; deamido-NAD(+) from nicotinate D-ribonucleotide: step 1/1.</text>
</comment>
<comment type="similarity">
    <text evidence="1">Belongs to the NadD family.</text>
</comment>
<name>NADD_OCEIH</name>
<gene>
    <name evidence="1" type="primary">nadD</name>
    <name type="ordered locus">OB1985</name>
</gene>
<proteinExistence type="inferred from homology"/>
<feature type="chain" id="PRO_0000181431" description="Probable nicotinate-nucleotide adenylyltransferase">
    <location>
        <begin position="1"/>
        <end position="191"/>
    </location>
</feature>
<evidence type="ECO:0000255" key="1">
    <source>
        <dbReference type="HAMAP-Rule" id="MF_00244"/>
    </source>
</evidence>
<dbReference type="EC" id="2.7.7.18" evidence="1"/>
<dbReference type="EMBL" id="BA000028">
    <property type="protein sequence ID" value="BAC13941.1"/>
    <property type="molecule type" value="Genomic_DNA"/>
</dbReference>
<dbReference type="RefSeq" id="WP_011066382.1">
    <property type="nucleotide sequence ID" value="NC_004193.1"/>
</dbReference>
<dbReference type="SMR" id="Q8EPV1"/>
<dbReference type="STRING" id="221109.gene:10734231"/>
<dbReference type="KEGG" id="oih:OB1985"/>
<dbReference type="eggNOG" id="COG1057">
    <property type="taxonomic scope" value="Bacteria"/>
</dbReference>
<dbReference type="HOGENOM" id="CLU_069765_3_1_9"/>
<dbReference type="OrthoDB" id="5295945at2"/>
<dbReference type="PhylomeDB" id="Q8EPV1"/>
<dbReference type="UniPathway" id="UPA00253">
    <property type="reaction ID" value="UER00332"/>
</dbReference>
<dbReference type="Proteomes" id="UP000000822">
    <property type="component" value="Chromosome"/>
</dbReference>
<dbReference type="GO" id="GO:0005524">
    <property type="term" value="F:ATP binding"/>
    <property type="evidence" value="ECO:0007669"/>
    <property type="project" value="UniProtKB-KW"/>
</dbReference>
<dbReference type="GO" id="GO:0004515">
    <property type="term" value="F:nicotinate-nucleotide adenylyltransferase activity"/>
    <property type="evidence" value="ECO:0007669"/>
    <property type="project" value="UniProtKB-UniRule"/>
</dbReference>
<dbReference type="GO" id="GO:0009435">
    <property type="term" value="P:NAD biosynthetic process"/>
    <property type="evidence" value="ECO:0007669"/>
    <property type="project" value="UniProtKB-UniRule"/>
</dbReference>
<dbReference type="CDD" id="cd02165">
    <property type="entry name" value="NMNAT"/>
    <property type="match status" value="1"/>
</dbReference>
<dbReference type="Gene3D" id="3.40.50.620">
    <property type="entry name" value="HUPs"/>
    <property type="match status" value="1"/>
</dbReference>
<dbReference type="HAMAP" id="MF_00244">
    <property type="entry name" value="NaMN_adenylyltr"/>
    <property type="match status" value="1"/>
</dbReference>
<dbReference type="InterPro" id="IPR004821">
    <property type="entry name" value="Cyt_trans-like"/>
</dbReference>
<dbReference type="InterPro" id="IPR005248">
    <property type="entry name" value="NadD/NMNAT"/>
</dbReference>
<dbReference type="InterPro" id="IPR014729">
    <property type="entry name" value="Rossmann-like_a/b/a_fold"/>
</dbReference>
<dbReference type="NCBIfam" id="TIGR00125">
    <property type="entry name" value="cyt_tran_rel"/>
    <property type="match status" value="1"/>
</dbReference>
<dbReference type="NCBIfam" id="TIGR00482">
    <property type="entry name" value="nicotinate (nicotinamide) nucleotide adenylyltransferase"/>
    <property type="match status" value="1"/>
</dbReference>
<dbReference type="NCBIfam" id="NF000840">
    <property type="entry name" value="PRK00071.1-3"/>
    <property type="match status" value="1"/>
</dbReference>
<dbReference type="NCBIfam" id="NF000841">
    <property type="entry name" value="PRK00071.1-4"/>
    <property type="match status" value="1"/>
</dbReference>
<dbReference type="PANTHER" id="PTHR39321">
    <property type="entry name" value="NICOTINATE-NUCLEOTIDE ADENYLYLTRANSFERASE-RELATED"/>
    <property type="match status" value="1"/>
</dbReference>
<dbReference type="PANTHER" id="PTHR39321:SF3">
    <property type="entry name" value="PHOSPHOPANTETHEINE ADENYLYLTRANSFERASE"/>
    <property type="match status" value="1"/>
</dbReference>
<dbReference type="Pfam" id="PF01467">
    <property type="entry name" value="CTP_transf_like"/>
    <property type="match status" value="1"/>
</dbReference>
<dbReference type="SUPFAM" id="SSF52374">
    <property type="entry name" value="Nucleotidylyl transferase"/>
    <property type="match status" value="1"/>
</dbReference>
<sequence>MREIGILGGTFDPPHLGHLLIAEEVRRAKELDEIWFIPTNTPPHKEDTTTSADHRTSMIQLAIDSHPSFKLNDMELKREGKSYTYDTIQELTDLYPSHTFYFIIGGDMVEFLPKWHRIDELLEMITFIGVSRPGYSLQTSYPVDFVDIPTIQLSSTILRERLQNREWIRYLLPDSVMQYVREHQLYGFGRN</sequence>
<keyword id="KW-0067">ATP-binding</keyword>
<keyword id="KW-0520">NAD</keyword>
<keyword id="KW-0547">Nucleotide-binding</keyword>
<keyword id="KW-0548">Nucleotidyltransferase</keyword>
<keyword id="KW-0662">Pyridine nucleotide biosynthesis</keyword>
<keyword id="KW-1185">Reference proteome</keyword>
<keyword id="KW-0808">Transferase</keyword>
<accession>Q8EPV1</accession>
<organism>
    <name type="scientific">Oceanobacillus iheyensis (strain DSM 14371 / CIP 107618 / JCM 11309 / KCTC 3954 / HTE831)</name>
    <dbReference type="NCBI Taxonomy" id="221109"/>
    <lineage>
        <taxon>Bacteria</taxon>
        <taxon>Bacillati</taxon>
        <taxon>Bacillota</taxon>
        <taxon>Bacilli</taxon>
        <taxon>Bacillales</taxon>
        <taxon>Bacillaceae</taxon>
        <taxon>Oceanobacillus</taxon>
    </lineage>
</organism>